<dbReference type="EMBL" id="CT978603">
    <property type="protein sequence ID" value="CAK29259.1"/>
    <property type="molecule type" value="Genomic_DNA"/>
</dbReference>
<dbReference type="SMR" id="A5GWK0"/>
<dbReference type="STRING" id="316278.SynRCC307_2356"/>
<dbReference type="KEGG" id="syr:SynRCC307_2356"/>
<dbReference type="eggNOG" id="COG0244">
    <property type="taxonomic scope" value="Bacteria"/>
</dbReference>
<dbReference type="HOGENOM" id="CLU_092227_1_1_3"/>
<dbReference type="OrthoDB" id="9808307at2"/>
<dbReference type="Proteomes" id="UP000001115">
    <property type="component" value="Chromosome"/>
</dbReference>
<dbReference type="GO" id="GO:1990904">
    <property type="term" value="C:ribonucleoprotein complex"/>
    <property type="evidence" value="ECO:0007669"/>
    <property type="project" value="UniProtKB-KW"/>
</dbReference>
<dbReference type="GO" id="GO:0005840">
    <property type="term" value="C:ribosome"/>
    <property type="evidence" value="ECO:0007669"/>
    <property type="project" value="UniProtKB-KW"/>
</dbReference>
<dbReference type="GO" id="GO:0070180">
    <property type="term" value="F:large ribosomal subunit rRNA binding"/>
    <property type="evidence" value="ECO:0007669"/>
    <property type="project" value="UniProtKB-UniRule"/>
</dbReference>
<dbReference type="GO" id="GO:0006412">
    <property type="term" value="P:translation"/>
    <property type="evidence" value="ECO:0007669"/>
    <property type="project" value="UniProtKB-UniRule"/>
</dbReference>
<dbReference type="CDD" id="cd05797">
    <property type="entry name" value="Ribosomal_L10"/>
    <property type="match status" value="1"/>
</dbReference>
<dbReference type="Gene3D" id="3.30.70.1730">
    <property type="match status" value="1"/>
</dbReference>
<dbReference type="Gene3D" id="6.10.250.290">
    <property type="match status" value="1"/>
</dbReference>
<dbReference type="HAMAP" id="MF_00362">
    <property type="entry name" value="Ribosomal_uL10"/>
    <property type="match status" value="1"/>
</dbReference>
<dbReference type="InterPro" id="IPR001790">
    <property type="entry name" value="Ribosomal_uL10"/>
</dbReference>
<dbReference type="InterPro" id="IPR043141">
    <property type="entry name" value="Ribosomal_uL10-like_sf"/>
</dbReference>
<dbReference type="InterPro" id="IPR022973">
    <property type="entry name" value="Ribosomal_uL10_bac"/>
</dbReference>
<dbReference type="InterPro" id="IPR047865">
    <property type="entry name" value="Ribosomal_uL10_bac_type"/>
</dbReference>
<dbReference type="NCBIfam" id="NF000955">
    <property type="entry name" value="PRK00099.1-1"/>
    <property type="match status" value="1"/>
</dbReference>
<dbReference type="PANTHER" id="PTHR11560">
    <property type="entry name" value="39S RIBOSOMAL PROTEIN L10, MITOCHONDRIAL"/>
    <property type="match status" value="1"/>
</dbReference>
<dbReference type="Pfam" id="PF00466">
    <property type="entry name" value="Ribosomal_L10"/>
    <property type="match status" value="1"/>
</dbReference>
<dbReference type="SUPFAM" id="SSF160369">
    <property type="entry name" value="Ribosomal protein L10-like"/>
    <property type="match status" value="1"/>
</dbReference>
<reference key="1">
    <citation type="submission" date="2006-05" db="EMBL/GenBank/DDBJ databases">
        <authorList>
            <consortium name="Genoscope"/>
        </authorList>
    </citation>
    <scope>NUCLEOTIDE SEQUENCE [LARGE SCALE GENOMIC DNA]</scope>
    <source>
        <strain>RCC307</strain>
    </source>
</reference>
<name>RL10_SYNR3</name>
<proteinExistence type="inferred from homology"/>
<keyword id="KW-1185">Reference proteome</keyword>
<keyword id="KW-0687">Ribonucleoprotein</keyword>
<keyword id="KW-0689">Ribosomal protein</keyword>
<keyword id="KW-0694">RNA-binding</keyword>
<keyword id="KW-0699">rRNA-binding</keyword>
<gene>
    <name evidence="1" type="primary">rplJ</name>
    <name evidence="1" type="synonym">rpl10</name>
    <name type="ordered locus">SynRCC307_2356</name>
</gene>
<protein>
    <recommendedName>
        <fullName evidence="1">Large ribosomal subunit protein uL10</fullName>
    </recommendedName>
    <alternativeName>
        <fullName evidence="2">50S ribosomal protein L10</fullName>
    </alternativeName>
</protein>
<evidence type="ECO:0000255" key="1">
    <source>
        <dbReference type="HAMAP-Rule" id="MF_00362"/>
    </source>
</evidence>
<evidence type="ECO:0000305" key="2"/>
<sequence>MGRTLENKQQIVEELKQLLGEAEMALVLDYKGLSIKEMSDLRGRLAANGICKVTKNTLMRRAIDGNDTWSDLDPLLTGTNAFVLVKGDVGGAVKAVQSFQKDSKKSELKGGLFEGRLLSQNDIKAIGDLPSKEGLMAQIAGSINAVATKLAVGVNEVPSGLARALQQHADSENS</sequence>
<comment type="function">
    <text evidence="1">Forms part of the ribosomal stalk, playing a central role in the interaction of the ribosome with GTP-bound translation factors.</text>
</comment>
<comment type="subunit">
    <text evidence="1">Part of the ribosomal stalk of the 50S ribosomal subunit. The N-terminus interacts with L11 and the large rRNA to form the base of the stalk. The C-terminus forms an elongated spine to which L12 dimers bind in a sequential fashion forming a multimeric L10(L12)X complex.</text>
</comment>
<comment type="similarity">
    <text evidence="1">Belongs to the universal ribosomal protein uL10 family.</text>
</comment>
<accession>A5GWK0</accession>
<organism>
    <name type="scientific">Synechococcus sp. (strain RCC307)</name>
    <dbReference type="NCBI Taxonomy" id="316278"/>
    <lineage>
        <taxon>Bacteria</taxon>
        <taxon>Bacillati</taxon>
        <taxon>Cyanobacteriota</taxon>
        <taxon>Cyanophyceae</taxon>
        <taxon>Synechococcales</taxon>
        <taxon>Synechococcaceae</taxon>
        <taxon>Synechococcus</taxon>
    </lineage>
</organism>
<feature type="chain" id="PRO_1000005611" description="Large ribosomal subunit protein uL10">
    <location>
        <begin position="1"/>
        <end position="174"/>
    </location>
</feature>